<sequence>MNQADRALQASQARVYNFSAGPAVLPTEVLEQAREEMLSWQGSGMSVMEMSHRGREFESIMAQAFADLRELLAVPDNYEILFLQGGAIAENAIVPLNLMRRLSLDAPKADYVVTGTWSVKSQQEARKYGEVNIAASSEAERFHRIPDVSAWKLSDDAAYVHLCTNETIVGVEYQETPDIGQAHGRVVVADVSSHILSRPVDWNGYAVLYGGAQKNIGPAGLTIVIARKDLLGHAHPLCPSAFNWRLVAENGSMYNTPPTYAIYVAGLVFQWIKRQGGVEALETRNIVKAKMLYDFIDASGFYRNDIHPSCRSRMNVPFFLNDESRNEAFLAQARAQGLVQLKGHKSVGGMRASIYNAMPLEGVEALVDFMREFERTAA</sequence>
<dbReference type="EC" id="2.6.1.52" evidence="1"/>
<dbReference type="EMBL" id="AL646052">
    <property type="protein sequence ID" value="CAD14605.1"/>
    <property type="molecule type" value="Genomic_DNA"/>
</dbReference>
<dbReference type="RefSeq" id="WP_011000855.1">
    <property type="nucleotide sequence ID" value="NC_003295.1"/>
</dbReference>
<dbReference type="SMR" id="Q8Y0Z0"/>
<dbReference type="STRING" id="267608.RSc0903"/>
<dbReference type="EnsemblBacteria" id="CAD14605">
    <property type="protein sequence ID" value="CAD14605"/>
    <property type="gene ID" value="RSc0903"/>
</dbReference>
<dbReference type="KEGG" id="rso:RSc0903"/>
<dbReference type="eggNOG" id="COG1932">
    <property type="taxonomic scope" value="Bacteria"/>
</dbReference>
<dbReference type="HOGENOM" id="CLU_034866_0_2_4"/>
<dbReference type="UniPathway" id="UPA00135">
    <property type="reaction ID" value="UER00197"/>
</dbReference>
<dbReference type="UniPathway" id="UPA00244">
    <property type="reaction ID" value="UER00311"/>
</dbReference>
<dbReference type="Proteomes" id="UP000001436">
    <property type="component" value="Chromosome"/>
</dbReference>
<dbReference type="GO" id="GO:0005737">
    <property type="term" value="C:cytoplasm"/>
    <property type="evidence" value="ECO:0007669"/>
    <property type="project" value="UniProtKB-SubCell"/>
</dbReference>
<dbReference type="GO" id="GO:0004648">
    <property type="term" value="F:O-phospho-L-serine:2-oxoglutarate aminotransferase activity"/>
    <property type="evidence" value="ECO:0007669"/>
    <property type="project" value="UniProtKB-UniRule"/>
</dbReference>
<dbReference type="GO" id="GO:0030170">
    <property type="term" value="F:pyridoxal phosphate binding"/>
    <property type="evidence" value="ECO:0007669"/>
    <property type="project" value="UniProtKB-UniRule"/>
</dbReference>
<dbReference type="GO" id="GO:0006564">
    <property type="term" value="P:L-serine biosynthetic process"/>
    <property type="evidence" value="ECO:0007669"/>
    <property type="project" value="UniProtKB-UniRule"/>
</dbReference>
<dbReference type="GO" id="GO:0008615">
    <property type="term" value="P:pyridoxine biosynthetic process"/>
    <property type="evidence" value="ECO:0007669"/>
    <property type="project" value="UniProtKB-UniRule"/>
</dbReference>
<dbReference type="CDD" id="cd00611">
    <property type="entry name" value="PSAT_like"/>
    <property type="match status" value="1"/>
</dbReference>
<dbReference type="FunFam" id="3.40.640.10:FF:000010">
    <property type="entry name" value="Phosphoserine aminotransferase"/>
    <property type="match status" value="1"/>
</dbReference>
<dbReference type="FunFam" id="3.90.1150.10:FF:000006">
    <property type="entry name" value="Phosphoserine aminotransferase"/>
    <property type="match status" value="1"/>
</dbReference>
<dbReference type="Gene3D" id="3.90.1150.10">
    <property type="entry name" value="Aspartate Aminotransferase, domain 1"/>
    <property type="match status" value="1"/>
</dbReference>
<dbReference type="Gene3D" id="3.40.640.10">
    <property type="entry name" value="Type I PLP-dependent aspartate aminotransferase-like (Major domain)"/>
    <property type="match status" value="1"/>
</dbReference>
<dbReference type="HAMAP" id="MF_00160">
    <property type="entry name" value="SerC_aminotrans_5"/>
    <property type="match status" value="1"/>
</dbReference>
<dbReference type="InterPro" id="IPR000192">
    <property type="entry name" value="Aminotrans_V_dom"/>
</dbReference>
<dbReference type="InterPro" id="IPR022278">
    <property type="entry name" value="Pser_aminoTfrase"/>
</dbReference>
<dbReference type="InterPro" id="IPR015424">
    <property type="entry name" value="PyrdxlP-dep_Trfase"/>
</dbReference>
<dbReference type="InterPro" id="IPR015421">
    <property type="entry name" value="PyrdxlP-dep_Trfase_major"/>
</dbReference>
<dbReference type="InterPro" id="IPR015422">
    <property type="entry name" value="PyrdxlP-dep_Trfase_small"/>
</dbReference>
<dbReference type="NCBIfam" id="NF003764">
    <property type="entry name" value="PRK05355.1"/>
    <property type="match status" value="1"/>
</dbReference>
<dbReference type="NCBIfam" id="TIGR01364">
    <property type="entry name" value="serC_1"/>
    <property type="match status" value="1"/>
</dbReference>
<dbReference type="PANTHER" id="PTHR43247">
    <property type="entry name" value="PHOSPHOSERINE AMINOTRANSFERASE"/>
    <property type="match status" value="1"/>
</dbReference>
<dbReference type="PANTHER" id="PTHR43247:SF1">
    <property type="entry name" value="PHOSPHOSERINE AMINOTRANSFERASE"/>
    <property type="match status" value="1"/>
</dbReference>
<dbReference type="Pfam" id="PF00266">
    <property type="entry name" value="Aminotran_5"/>
    <property type="match status" value="1"/>
</dbReference>
<dbReference type="PIRSF" id="PIRSF000525">
    <property type="entry name" value="SerC"/>
    <property type="match status" value="1"/>
</dbReference>
<dbReference type="SUPFAM" id="SSF53383">
    <property type="entry name" value="PLP-dependent transferases"/>
    <property type="match status" value="1"/>
</dbReference>
<reference key="1">
    <citation type="journal article" date="2002" name="Nature">
        <title>Genome sequence of the plant pathogen Ralstonia solanacearum.</title>
        <authorList>
            <person name="Salanoubat M."/>
            <person name="Genin S."/>
            <person name="Artiguenave F."/>
            <person name="Gouzy J."/>
            <person name="Mangenot S."/>
            <person name="Arlat M."/>
            <person name="Billault A."/>
            <person name="Brottier P."/>
            <person name="Camus J.-C."/>
            <person name="Cattolico L."/>
            <person name="Chandler M."/>
            <person name="Choisne N."/>
            <person name="Claudel-Renard C."/>
            <person name="Cunnac S."/>
            <person name="Demange N."/>
            <person name="Gaspin C."/>
            <person name="Lavie M."/>
            <person name="Moisan A."/>
            <person name="Robert C."/>
            <person name="Saurin W."/>
            <person name="Schiex T."/>
            <person name="Siguier P."/>
            <person name="Thebault P."/>
            <person name="Whalen M."/>
            <person name="Wincker P."/>
            <person name="Levy M."/>
            <person name="Weissenbach J."/>
            <person name="Boucher C.A."/>
        </authorList>
    </citation>
    <scope>NUCLEOTIDE SEQUENCE [LARGE SCALE GENOMIC DNA]</scope>
    <source>
        <strain>ATCC BAA-1114 / GMI1000</strain>
    </source>
</reference>
<gene>
    <name evidence="1" type="primary">serC</name>
    <name type="ordered locus">RSc0903</name>
    <name type="ORF">RS04512</name>
</gene>
<name>SERC_RALN1</name>
<comment type="function">
    <text evidence="1">Catalyzes the reversible conversion of 3-phosphohydroxypyruvate to phosphoserine and of 3-hydroxy-2-oxo-4-phosphonooxybutanoate to phosphohydroxythreonine.</text>
</comment>
<comment type="catalytic activity">
    <reaction evidence="1">
        <text>O-phospho-L-serine + 2-oxoglutarate = 3-phosphooxypyruvate + L-glutamate</text>
        <dbReference type="Rhea" id="RHEA:14329"/>
        <dbReference type="ChEBI" id="CHEBI:16810"/>
        <dbReference type="ChEBI" id="CHEBI:18110"/>
        <dbReference type="ChEBI" id="CHEBI:29985"/>
        <dbReference type="ChEBI" id="CHEBI:57524"/>
        <dbReference type="EC" id="2.6.1.52"/>
    </reaction>
</comment>
<comment type="catalytic activity">
    <reaction evidence="1">
        <text>4-(phosphooxy)-L-threonine + 2-oxoglutarate = (R)-3-hydroxy-2-oxo-4-phosphooxybutanoate + L-glutamate</text>
        <dbReference type="Rhea" id="RHEA:16573"/>
        <dbReference type="ChEBI" id="CHEBI:16810"/>
        <dbReference type="ChEBI" id="CHEBI:29985"/>
        <dbReference type="ChEBI" id="CHEBI:58452"/>
        <dbReference type="ChEBI" id="CHEBI:58538"/>
        <dbReference type="EC" id="2.6.1.52"/>
    </reaction>
</comment>
<comment type="cofactor">
    <cofactor evidence="1">
        <name>pyridoxal 5'-phosphate</name>
        <dbReference type="ChEBI" id="CHEBI:597326"/>
    </cofactor>
    <text evidence="1">Binds 1 pyridoxal phosphate per subunit.</text>
</comment>
<comment type="pathway">
    <text evidence="1">Amino-acid biosynthesis; L-serine biosynthesis; L-serine from 3-phospho-D-glycerate: step 2/3.</text>
</comment>
<comment type="pathway">
    <text evidence="1">Cofactor biosynthesis; pyridoxine 5'-phosphate biosynthesis; pyridoxine 5'-phosphate from D-erythrose 4-phosphate: step 3/5.</text>
</comment>
<comment type="subunit">
    <text evidence="1">Homodimer.</text>
</comment>
<comment type="subcellular location">
    <subcellularLocation>
        <location evidence="1">Cytoplasm</location>
    </subcellularLocation>
</comment>
<comment type="similarity">
    <text evidence="1">Belongs to the class-V pyridoxal-phosphate-dependent aminotransferase family. SerC subfamily.</text>
</comment>
<organism>
    <name type="scientific">Ralstonia nicotianae (strain ATCC BAA-1114 / GMI1000)</name>
    <name type="common">Ralstonia solanacearum</name>
    <dbReference type="NCBI Taxonomy" id="267608"/>
    <lineage>
        <taxon>Bacteria</taxon>
        <taxon>Pseudomonadati</taxon>
        <taxon>Pseudomonadota</taxon>
        <taxon>Betaproteobacteria</taxon>
        <taxon>Burkholderiales</taxon>
        <taxon>Burkholderiaceae</taxon>
        <taxon>Ralstonia</taxon>
        <taxon>Ralstonia solanacearum species complex</taxon>
    </lineage>
</organism>
<keyword id="KW-0028">Amino-acid biosynthesis</keyword>
<keyword id="KW-0032">Aminotransferase</keyword>
<keyword id="KW-0963">Cytoplasm</keyword>
<keyword id="KW-0663">Pyridoxal phosphate</keyword>
<keyword id="KW-0664">Pyridoxine biosynthesis</keyword>
<keyword id="KW-1185">Reference proteome</keyword>
<keyword id="KW-0718">Serine biosynthesis</keyword>
<keyword id="KW-0808">Transferase</keyword>
<proteinExistence type="inferred from homology"/>
<accession>Q8Y0Z0</accession>
<evidence type="ECO:0000255" key="1">
    <source>
        <dbReference type="HAMAP-Rule" id="MF_00160"/>
    </source>
</evidence>
<feature type="chain" id="PRO_0000150202" description="Phosphoserine aminotransferase">
    <location>
        <begin position="1"/>
        <end position="378"/>
    </location>
</feature>
<feature type="binding site" evidence="1">
    <location>
        <position position="53"/>
    </location>
    <ligand>
        <name>L-glutamate</name>
        <dbReference type="ChEBI" id="CHEBI:29985"/>
    </ligand>
</feature>
<feature type="binding site" evidence="1">
    <location>
        <position position="117"/>
    </location>
    <ligand>
        <name>pyridoxal 5'-phosphate</name>
        <dbReference type="ChEBI" id="CHEBI:597326"/>
    </ligand>
</feature>
<feature type="binding site" evidence="1">
    <location>
        <position position="167"/>
    </location>
    <ligand>
        <name>pyridoxal 5'-phosphate</name>
        <dbReference type="ChEBI" id="CHEBI:597326"/>
    </ligand>
</feature>
<feature type="binding site" evidence="1">
    <location>
        <position position="190"/>
    </location>
    <ligand>
        <name>pyridoxal 5'-phosphate</name>
        <dbReference type="ChEBI" id="CHEBI:597326"/>
    </ligand>
</feature>
<feature type="binding site" evidence="1">
    <location>
        <position position="213"/>
    </location>
    <ligand>
        <name>pyridoxal 5'-phosphate</name>
        <dbReference type="ChEBI" id="CHEBI:597326"/>
    </ligand>
</feature>
<feature type="binding site" evidence="1">
    <location>
        <begin position="255"/>
        <end position="256"/>
    </location>
    <ligand>
        <name>pyridoxal 5'-phosphate</name>
        <dbReference type="ChEBI" id="CHEBI:597326"/>
    </ligand>
</feature>
<feature type="modified residue" description="N6-(pyridoxal phosphate)lysine" evidence="1">
    <location>
        <position position="214"/>
    </location>
</feature>
<protein>
    <recommendedName>
        <fullName evidence="1">Phosphoserine aminotransferase</fullName>
        <ecNumber evidence="1">2.6.1.52</ecNumber>
    </recommendedName>
    <alternativeName>
        <fullName evidence="1">Phosphohydroxythreonine aminotransferase</fullName>
        <shortName evidence="1">PSAT</shortName>
    </alternativeName>
</protein>